<name>TRHO_EHRCR</name>
<comment type="function">
    <text evidence="1">Catalyzes oxygen-dependent 5-hydroxyuridine (ho5U) modification at position 34 in tRNAs.</text>
</comment>
<comment type="catalytic activity">
    <reaction evidence="1">
        <text>uridine(34) in tRNA + AH2 + O2 = 5-hydroxyuridine(34) in tRNA + A + H2O</text>
        <dbReference type="Rhea" id="RHEA:64224"/>
        <dbReference type="Rhea" id="RHEA-COMP:11727"/>
        <dbReference type="Rhea" id="RHEA-COMP:13381"/>
        <dbReference type="ChEBI" id="CHEBI:13193"/>
        <dbReference type="ChEBI" id="CHEBI:15377"/>
        <dbReference type="ChEBI" id="CHEBI:15379"/>
        <dbReference type="ChEBI" id="CHEBI:17499"/>
        <dbReference type="ChEBI" id="CHEBI:65315"/>
        <dbReference type="ChEBI" id="CHEBI:136877"/>
    </reaction>
</comment>
<comment type="similarity">
    <text evidence="1">Belongs to the TrhO family.</text>
</comment>
<keyword id="KW-0560">Oxidoreductase</keyword>
<keyword id="KW-1185">Reference proteome</keyword>
<keyword id="KW-0819">tRNA processing</keyword>
<protein>
    <recommendedName>
        <fullName evidence="1">tRNA uridine(34) hydroxylase</fullName>
        <ecNumber evidence="1">1.14.-.-</ecNumber>
    </recommendedName>
    <alternativeName>
        <fullName evidence="1">tRNA hydroxylation protein O</fullName>
    </alternativeName>
</protein>
<evidence type="ECO:0000255" key="1">
    <source>
        <dbReference type="HAMAP-Rule" id="MF_00469"/>
    </source>
</evidence>
<proteinExistence type="inferred from homology"/>
<feature type="chain" id="PRO_0000242921" description="tRNA uridine(34) hydroxylase">
    <location>
        <begin position="1"/>
        <end position="275"/>
    </location>
</feature>
<feature type="domain" description="Rhodanese" evidence="1">
    <location>
        <begin position="122"/>
        <end position="218"/>
    </location>
</feature>
<feature type="active site" description="Cysteine persulfide intermediate" evidence="1">
    <location>
        <position position="178"/>
    </location>
</feature>
<accession>Q2GFU2</accession>
<gene>
    <name evidence="1" type="primary">trhO</name>
    <name type="ordered locus">ECH_0896</name>
</gene>
<reference key="1">
    <citation type="journal article" date="2006" name="PLoS Genet.">
        <title>Comparative genomics of emerging human ehrlichiosis agents.</title>
        <authorList>
            <person name="Dunning Hotopp J.C."/>
            <person name="Lin M."/>
            <person name="Madupu R."/>
            <person name="Crabtree J."/>
            <person name="Angiuoli S.V."/>
            <person name="Eisen J.A."/>
            <person name="Seshadri R."/>
            <person name="Ren Q."/>
            <person name="Wu M."/>
            <person name="Utterback T.R."/>
            <person name="Smith S."/>
            <person name="Lewis M."/>
            <person name="Khouri H."/>
            <person name="Zhang C."/>
            <person name="Niu H."/>
            <person name="Lin Q."/>
            <person name="Ohashi N."/>
            <person name="Zhi N."/>
            <person name="Nelson W.C."/>
            <person name="Brinkac L.M."/>
            <person name="Dodson R.J."/>
            <person name="Rosovitz M.J."/>
            <person name="Sundaram J.P."/>
            <person name="Daugherty S.C."/>
            <person name="Davidsen T."/>
            <person name="Durkin A.S."/>
            <person name="Gwinn M.L."/>
            <person name="Haft D.H."/>
            <person name="Selengut J.D."/>
            <person name="Sullivan S.A."/>
            <person name="Zafar N."/>
            <person name="Zhou L."/>
            <person name="Benahmed F."/>
            <person name="Forberger H."/>
            <person name="Halpin R."/>
            <person name="Mulligan S."/>
            <person name="Robinson J."/>
            <person name="White O."/>
            <person name="Rikihisa Y."/>
            <person name="Tettelin H."/>
        </authorList>
    </citation>
    <scope>NUCLEOTIDE SEQUENCE [LARGE SCALE GENOMIC DNA]</scope>
    <source>
        <strain>ATCC CRL-10679 / Arkansas</strain>
    </source>
</reference>
<organism>
    <name type="scientific">Ehrlichia chaffeensis (strain ATCC CRL-10679 / Arkansas)</name>
    <dbReference type="NCBI Taxonomy" id="205920"/>
    <lineage>
        <taxon>Bacteria</taxon>
        <taxon>Pseudomonadati</taxon>
        <taxon>Pseudomonadota</taxon>
        <taxon>Alphaproteobacteria</taxon>
        <taxon>Rickettsiales</taxon>
        <taxon>Anaplasmataceae</taxon>
        <taxon>Ehrlichia</taxon>
    </lineage>
</organism>
<dbReference type="EC" id="1.14.-.-" evidence="1"/>
<dbReference type="EMBL" id="CP000236">
    <property type="protein sequence ID" value="ABD44543.1"/>
    <property type="molecule type" value="Genomic_DNA"/>
</dbReference>
<dbReference type="RefSeq" id="WP_006010486.1">
    <property type="nucleotide sequence ID" value="NC_007799.1"/>
</dbReference>
<dbReference type="SMR" id="Q2GFU2"/>
<dbReference type="KEGG" id="ech:ECH_0896"/>
<dbReference type="eggNOG" id="COG1054">
    <property type="taxonomic scope" value="Bacteria"/>
</dbReference>
<dbReference type="HOGENOM" id="CLU_038878_0_1_5"/>
<dbReference type="OrthoDB" id="9778326at2"/>
<dbReference type="Proteomes" id="UP000008320">
    <property type="component" value="Chromosome"/>
</dbReference>
<dbReference type="GO" id="GO:0016705">
    <property type="term" value="F:oxidoreductase activity, acting on paired donors, with incorporation or reduction of molecular oxygen"/>
    <property type="evidence" value="ECO:0007669"/>
    <property type="project" value="UniProtKB-UniRule"/>
</dbReference>
<dbReference type="GO" id="GO:0006400">
    <property type="term" value="P:tRNA modification"/>
    <property type="evidence" value="ECO:0007669"/>
    <property type="project" value="UniProtKB-UniRule"/>
</dbReference>
<dbReference type="CDD" id="cd01518">
    <property type="entry name" value="RHOD_YceA"/>
    <property type="match status" value="1"/>
</dbReference>
<dbReference type="Gene3D" id="3.30.70.100">
    <property type="match status" value="1"/>
</dbReference>
<dbReference type="Gene3D" id="3.40.250.10">
    <property type="entry name" value="Rhodanese-like domain"/>
    <property type="match status" value="1"/>
</dbReference>
<dbReference type="HAMAP" id="MF_00469">
    <property type="entry name" value="TrhO"/>
    <property type="match status" value="1"/>
</dbReference>
<dbReference type="InterPro" id="IPR001763">
    <property type="entry name" value="Rhodanese-like_dom"/>
</dbReference>
<dbReference type="InterPro" id="IPR036873">
    <property type="entry name" value="Rhodanese-like_dom_sf"/>
</dbReference>
<dbReference type="InterPro" id="IPR020936">
    <property type="entry name" value="TrhO"/>
</dbReference>
<dbReference type="InterPro" id="IPR040503">
    <property type="entry name" value="TRHO_N"/>
</dbReference>
<dbReference type="PANTHER" id="PTHR43268:SF3">
    <property type="entry name" value="RHODANESE-LIKE DOMAIN-CONTAINING PROTEIN 7-RELATED"/>
    <property type="match status" value="1"/>
</dbReference>
<dbReference type="PANTHER" id="PTHR43268">
    <property type="entry name" value="THIOSULFATE SULFURTRANSFERASE/RHODANESE-LIKE DOMAIN-CONTAINING PROTEIN 2"/>
    <property type="match status" value="1"/>
</dbReference>
<dbReference type="Pfam" id="PF00581">
    <property type="entry name" value="Rhodanese"/>
    <property type="match status" value="1"/>
</dbReference>
<dbReference type="Pfam" id="PF17773">
    <property type="entry name" value="UPF0176_N"/>
    <property type="match status" value="1"/>
</dbReference>
<dbReference type="SMART" id="SM00450">
    <property type="entry name" value="RHOD"/>
    <property type="match status" value="1"/>
</dbReference>
<dbReference type="SUPFAM" id="SSF52821">
    <property type="entry name" value="Rhodanese/Cell cycle control phosphatase"/>
    <property type="match status" value="1"/>
</dbReference>
<dbReference type="PROSITE" id="PS50206">
    <property type="entry name" value="RHODANESE_3"/>
    <property type="match status" value="1"/>
</dbReference>
<sequence length="275" mass="31650">MGYVVSTFYRFVHLSNYYDIQPVLKEFCVQHSIKGTIILAEQGINATIAADKQSSLDEFFSFLNLDDRLKDIRYHKSFAMHNPFSKMKVKLRKELVCLGIEDFDNSVCGEYVSPQDWDDLISRSDVYTIDTRNTYEINFGKFKNAINPQTKCFRDFPEWAISWASNKVDQDPIIAMYCTGGIRCEKSTAFMKDLGFSKVYHLKGGILEYFKSTQNKNSLWEGDCFTFDDRIAVDNKLVPAHVKCVSCDVCVTPEEMKSITRGHVLCFNCKENVKI</sequence>